<protein>
    <recommendedName>
        <fullName>Uncharacterized protein ML2427</fullName>
    </recommendedName>
</protein>
<gene>
    <name type="ordered locus">ML2427</name>
    <name type="ORF">B2168_C1_175</name>
</gene>
<feature type="chain" id="PRO_0000103711" description="Uncharacterized protein ML2427">
    <location>
        <begin position="1"/>
        <end position="367"/>
    </location>
</feature>
<comment type="similarity">
    <text evidence="1">To M.tuberculosis Rv0502.</text>
</comment>
<comment type="sequence caution" evidence="1">
    <conflict type="erroneous initiation">
        <sequence resource="EMBL-CDS" id="CAC31943"/>
    </conflict>
</comment>
<reference key="1">
    <citation type="submission" date="1994-03" db="EMBL/GenBank/DDBJ databases">
        <authorList>
            <person name="Smith D.R."/>
            <person name="Robison K."/>
        </authorList>
    </citation>
    <scope>NUCLEOTIDE SEQUENCE [GENOMIC DNA]</scope>
</reference>
<reference key="2">
    <citation type="journal article" date="2001" name="Nature">
        <title>Massive gene decay in the leprosy bacillus.</title>
        <authorList>
            <person name="Cole S.T."/>
            <person name="Eiglmeier K."/>
            <person name="Parkhill J."/>
            <person name="James K.D."/>
            <person name="Thomson N.R."/>
            <person name="Wheeler P.R."/>
            <person name="Honore N."/>
            <person name="Garnier T."/>
            <person name="Churcher C.M."/>
            <person name="Harris D.E."/>
            <person name="Mungall K.L."/>
            <person name="Basham D."/>
            <person name="Brown D."/>
            <person name="Chillingworth T."/>
            <person name="Connor R."/>
            <person name="Davies R.M."/>
            <person name="Devlin K."/>
            <person name="Duthoy S."/>
            <person name="Feltwell T."/>
            <person name="Fraser A."/>
            <person name="Hamlin N."/>
            <person name="Holroyd S."/>
            <person name="Hornsby T."/>
            <person name="Jagels K."/>
            <person name="Lacroix C."/>
            <person name="Maclean J."/>
            <person name="Moule S."/>
            <person name="Murphy L.D."/>
            <person name="Oliver K."/>
            <person name="Quail M.A."/>
            <person name="Rajandream M.A."/>
            <person name="Rutherford K.M."/>
            <person name="Rutter S."/>
            <person name="Seeger K."/>
            <person name="Simon S."/>
            <person name="Simmonds M."/>
            <person name="Skelton J."/>
            <person name="Squares R."/>
            <person name="Squares S."/>
            <person name="Stevens K."/>
            <person name="Taylor K."/>
            <person name="Whitehead S."/>
            <person name="Woodward J.R."/>
            <person name="Barrell B.G."/>
        </authorList>
    </citation>
    <scope>NUCLEOTIDE SEQUENCE [LARGE SCALE GENOMIC DNA]</scope>
    <source>
        <strain>TN</strain>
    </source>
</reference>
<evidence type="ECO:0000305" key="1"/>
<organism>
    <name type="scientific">Mycobacterium leprae (strain TN)</name>
    <dbReference type="NCBI Taxonomy" id="272631"/>
    <lineage>
        <taxon>Bacteria</taxon>
        <taxon>Bacillati</taxon>
        <taxon>Actinomycetota</taxon>
        <taxon>Actinomycetes</taxon>
        <taxon>Mycobacteriales</taxon>
        <taxon>Mycobacteriaceae</taxon>
        <taxon>Mycobacterium</taxon>
    </lineage>
</organism>
<sequence>MGWGQVDTVVGETRANVIPLHIKRGRVASRRRAGYRVDGSRQHPSLLSDLRGRASAEQIAAVVREIDEHRRSTGATNLWEVTTEAPLSELAQHVAAVAGFLRQRLTGDYTVDEFGFDPHFNNAIIRPFLRFFFKSWFRVEVSGIENLPSTGGALVVANHAGVLPFDGLMLSLAVHDEHPAQRDLRLLVADMVFDLPVVGEAVRKAGHTVACTSDAHRLLAAGELTAVFPEGYKGLGKRFQDRYRLQRFGRGGFVKAALSTKATIVPCSIVGSEEIYPMLTDVKLLARLFGVPYFPVTPLFPLAGPAGLVPLPSKWRIAFGEPIYTTDYAATDADDPMVTFELTDQVRETIQQTLYRLLAGRRNIFFG</sequence>
<dbReference type="EMBL" id="U00018">
    <property type="protein sequence ID" value="AAA17260.1"/>
    <property type="molecule type" value="Genomic_DNA"/>
</dbReference>
<dbReference type="EMBL" id="AL583925">
    <property type="protein sequence ID" value="CAC31943.1"/>
    <property type="status" value="ALT_INIT"/>
    <property type="molecule type" value="Genomic_DNA"/>
</dbReference>
<dbReference type="PIR" id="G87212">
    <property type="entry name" value="G87212"/>
</dbReference>
<dbReference type="PIR" id="S72924">
    <property type="entry name" value="S72924"/>
</dbReference>
<dbReference type="SMR" id="P54878"/>
<dbReference type="STRING" id="272631.gene:17576289"/>
<dbReference type="KEGG" id="mle:ML2427"/>
<dbReference type="Leproma" id="ML2427"/>
<dbReference type="eggNOG" id="COG0204">
    <property type="taxonomic scope" value="Bacteria"/>
</dbReference>
<dbReference type="HOGENOM" id="CLU_042900_1_1_11"/>
<dbReference type="Proteomes" id="UP000000806">
    <property type="component" value="Chromosome"/>
</dbReference>
<dbReference type="GO" id="GO:0016020">
    <property type="term" value="C:membrane"/>
    <property type="evidence" value="ECO:0007669"/>
    <property type="project" value="TreeGrafter"/>
</dbReference>
<dbReference type="GO" id="GO:0016746">
    <property type="term" value="F:acyltransferase activity"/>
    <property type="evidence" value="ECO:0007669"/>
    <property type="project" value="InterPro"/>
</dbReference>
<dbReference type="CDD" id="cd07987">
    <property type="entry name" value="LPLAT_MGAT-like"/>
    <property type="match status" value="1"/>
</dbReference>
<dbReference type="InterPro" id="IPR016676">
    <property type="entry name" value="P_lipid/glycerol_AcTrfase_prd"/>
</dbReference>
<dbReference type="InterPro" id="IPR002123">
    <property type="entry name" value="Plipid/glycerol_acylTrfase"/>
</dbReference>
<dbReference type="PANTHER" id="PTHR22753:SF14">
    <property type="entry name" value="MONOACYLGLYCEROL_DIACYLGLYCEROL O-ACYLTRANSFERASE"/>
    <property type="match status" value="1"/>
</dbReference>
<dbReference type="PANTHER" id="PTHR22753">
    <property type="entry name" value="TRANSMEMBRANE PROTEIN 68"/>
    <property type="match status" value="1"/>
</dbReference>
<dbReference type="Pfam" id="PF01553">
    <property type="entry name" value="Acyltransferase"/>
    <property type="match status" value="1"/>
</dbReference>
<dbReference type="PIRSF" id="PIRSF016753">
    <property type="entry name" value="P_lipid/glycerol_ac_tran_prd"/>
    <property type="match status" value="1"/>
</dbReference>
<dbReference type="SMART" id="SM00563">
    <property type="entry name" value="PlsC"/>
    <property type="match status" value="1"/>
</dbReference>
<dbReference type="SUPFAM" id="SSF69593">
    <property type="entry name" value="Glycerol-3-phosphate (1)-acyltransferase"/>
    <property type="match status" value="1"/>
</dbReference>
<keyword id="KW-1185">Reference proteome</keyword>
<accession>P54878</accession>
<accession>Q9CB58</accession>
<name>Y2427_MYCLE</name>
<proteinExistence type="predicted"/>